<organism>
    <name type="scientific">Francisella tularensis subsp. holarctica (strain OSU18)</name>
    <dbReference type="NCBI Taxonomy" id="393011"/>
    <lineage>
        <taxon>Bacteria</taxon>
        <taxon>Pseudomonadati</taxon>
        <taxon>Pseudomonadota</taxon>
        <taxon>Gammaproteobacteria</taxon>
        <taxon>Thiotrichales</taxon>
        <taxon>Francisellaceae</taxon>
        <taxon>Francisella</taxon>
    </lineage>
</organism>
<keyword id="KW-0998">Cell outer membrane</keyword>
<keyword id="KW-0143">Chaperone</keyword>
<keyword id="KW-0449">Lipoprotein</keyword>
<keyword id="KW-0472">Membrane</keyword>
<keyword id="KW-0564">Palmitate</keyword>
<keyword id="KW-0653">Protein transport</keyword>
<keyword id="KW-0732">Signal</keyword>
<keyword id="KW-0813">Transport</keyword>
<protein>
    <recommendedName>
        <fullName evidence="1">Outer-membrane lipoprotein LolB</fullName>
    </recommendedName>
</protein>
<dbReference type="EMBL" id="CP000437">
    <property type="protein sequence ID" value="ABI82179.1"/>
    <property type="status" value="ALT_INIT"/>
    <property type="molecule type" value="Genomic_DNA"/>
</dbReference>
<dbReference type="SMR" id="Q0BP05"/>
<dbReference type="KEGG" id="fth:FTH_0143"/>
<dbReference type="GO" id="GO:0009279">
    <property type="term" value="C:cell outer membrane"/>
    <property type="evidence" value="ECO:0007669"/>
    <property type="project" value="UniProtKB-SubCell"/>
</dbReference>
<dbReference type="GO" id="GO:0044874">
    <property type="term" value="P:lipoprotein localization to outer membrane"/>
    <property type="evidence" value="ECO:0007669"/>
    <property type="project" value="UniProtKB-UniRule"/>
</dbReference>
<dbReference type="GO" id="GO:0015031">
    <property type="term" value="P:protein transport"/>
    <property type="evidence" value="ECO:0007669"/>
    <property type="project" value="UniProtKB-KW"/>
</dbReference>
<dbReference type="CDD" id="cd16326">
    <property type="entry name" value="LolB"/>
    <property type="match status" value="1"/>
</dbReference>
<dbReference type="Gene3D" id="2.50.20.10">
    <property type="entry name" value="Lipoprotein localisation LolA/LolB/LppX"/>
    <property type="match status" value="1"/>
</dbReference>
<dbReference type="HAMAP" id="MF_00233">
    <property type="entry name" value="LolB"/>
    <property type="match status" value="1"/>
</dbReference>
<dbReference type="InterPro" id="IPR029046">
    <property type="entry name" value="LolA/LolB/LppX"/>
</dbReference>
<dbReference type="InterPro" id="IPR004565">
    <property type="entry name" value="OM_lipoprot_LolB"/>
</dbReference>
<dbReference type="NCBIfam" id="TIGR00548">
    <property type="entry name" value="lolB"/>
    <property type="match status" value="1"/>
</dbReference>
<dbReference type="Pfam" id="PF03550">
    <property type="entry name" value="LolB"/>
    <property type="match status" value="1"/>
</dbReference>
<dbReference type="SUPFAM" id="SSF89392">
    <property type="entry name" value="Prokaryotic lipoproteins and lipoprotein localization factors"/>
    <property type="match status" value="1"/>
</dbReference>
<dbReference type="PROSITE" id="PS51257">
    <property type="entry name" value="PROKAR_LIPOPROTEIN"/>
    <property type="match status" value="1"/>
</dbReference>
<comment type="function">
    <text evidence="1">Plays a critical role in the incorporation of lipoproteins in the outer membrane after they are released by the LolA protein.</text>
</comment>
<comment type="subunit">
    <text evidence="1">Monomer.</text>
</comment>
<comment type="subcellular location">
    <subcellularLocation>
        <location evidence="1">Cell outer membrane</location>
        <topology evidence="1">Lipid-anchor</topology>
    </subcellularLocation>
</comment>
<comment type="similarity">
    <text evidence="1">Belongs to the LolB family.</text>
</comment>
<comment type="sequence caution" evidence="2">
    <conflict type="erroneous initiation">
        <sequence resource="EMBL-CDS" id="ABI82179"/>
    </conflict>
</comment>
<name>LOLB_FRATO</name>
<sequence length="210" mass="23646">MSKLKIDTKRRFSLLIALVLIISLSSCATTQTNVTAITTKTVFNQETTYHNLLKLKKWQANGFIGIIYDNQAESANYTYLQDGDNFSIKLYGPLGIGSIEIKGDTNSVSLANSKGQKLTAKDAKTLMLEQLGWYVPVEGLKYWIKAIAIPNIRQTSELNTNNLLSKLSQNGWSISYSNYQLVDSKYPLPTKIRMSRDNLTLKIVIKSWQI</sequence>
<evidence type="ECO:0000255" key="1">
    <source>
        <dbReference type="HAMAP-Rule" id="MF_00233"/>
    </source>
</evidence>
<evidence type="ECO:0000305" key="2"/>
<feature type="signal peptide" evidence="1">
    <location>
        <begin position="1"/>
        <end position="26"/>
    </location>
</feature>
<feature type="chain" id="PRO_0000336602" description="Outer-membrane lipoprotein LolB">
    <location>
        <begin position="27"/>
        <end position="210"/>
    </location>
</feature>
<feature type="lipid moiety-binding region" description="N-palmitoyl cysteine" evidence="1">
    <location>
        <position position="27"/>
    </location>
</feature>
<feature type="lipid moiety-binding region" description="S-diacylglycerol cysteine" evidence="1">
    <location>
        <position position="27"/>
    </location>
</feature>
<proteinExistence type="inferred from homology"/>
<accession>Q0BP05</accession>
<reference key="1">
    <citation type="journal article" date="2006" name="J. Bacteriol.">
        <title>Chromosome rearrangement and diversification of Francisella tularensis revealed by the type B (OSU18) genome sequence.</title>
        <authorList>
            <person name="Petrosino J.F."/>
            <person name="Xiang Q."/>
            <person name="Karpathy S.E."/>
            <person name="Jiang H."/>
            <person name="Yerrapragada S."/>
            <person name="Liu Y."/>
            <person name="Gioia J."/>
            <person name="Hemphill L."/>
            <person name="Gonzalez A."/>
            <person name="Raghavan T.M."/>
            <person name="Uzman A."/>
            <person name="Fox G.E."/>
            <person name="Highlander S."/>
            <person name="Reichard M."/>
            <person name="Morton R.J."/>
            <person name="Clinkenbeard K.D."/>
            <person name="Weinstock G.M."/>
        </authorList>
    </citation>
    <scope>NUCLEOTIDE SEQUENCE [LARGE SCALE GENOMIC DNA]</scope>
    <source>
        <strain>OSU18</strain>
    </source>
</reference>
<gene>
    <name evidence="1" type="primary">lolB</name>
    <name type="ordered locus">FTH_0143</name>
</gene>